<dbReference type="EMBL" id="AP009552">
    <property type="protein sequence ID" value="BAG05163.1"/>
    <property type="molecule type" value="Genomic_DNA"/>
</dbReference>
<dbReference type="RefSeq" id="WP_002796124.1">
    <property type="nucleotide sequence ID" value="NC_010296.1"/>
</dbReference>
<dbReference type="SMR" id="B0JYC5"/>
<dbReference type="STRING" id="449447.MAE_53410"/>
<dbReference type="PaxDb" id="449447-MAE_53410"/>
<dbReference type="EnsemblBacteria" id="BAG05163">
    <property type="protein sequence ID" value="BAG05163"/>
    <property type="gene ID" value="MAE_53410"/>
</dbReference>
<dbReference type="KEGG" id="mar:MAE_53410"/>
<dbReference type="eggNOG" id="COG0216">
    <property type="taxonomic scope" value="Bacteria"/>
</dbReference>
<dbReference type="HOGENOM" id="CLU_036856_0_1_3"/>
<dbReference type="BioCyc" id="MAER449447:MAE_RS23220-MONOMER"/>
<dbReference type="Proteomes" id="UP000001510">
    <property type="component" value="Chromosome"/>
</dbReference>
<dbReference type="GO" id="GO:0005737">
    <property type="term" value="C:cytoplasm"/>
    <property type="evidence" value="ECO:0007669"/>
    <property type="project" value="UniProtKB-SubCell"/>
</dbReference>
<dbReference type="GO" id="GO:0016149">
    <property type="term" value="F:translation release factor activity, codon specific"/>
    <property type="evidence" value="ECO:0007669"/>
    <property type="project" value="UniProtKB-UniRule"/>
</dbReference>
<dbReference type="FunFam" id="3.30.160.20:FF:000004">
    <property type="entry name" value="Peptide chain release factor 1"/>
    <property type="match status" value="1"/>
</dbReference>
<dbReference type="FunFam" id="3.30.70.1660:FF:000002">
    <property type="entry name" value="Peptide chain release factor 1"/>
    <property type="match status" value="1"/>
</dbReference>
<dbReference type="FunFam" id="3.30.70.1660:FF:000014">
    <property type="entry name" value="Peptide chain release factor 1"/>
    <property type="match status" value="1"/>
</dbReference>
<dbReference type="Gene3D" id="3.30.160.20">
    <property type="match status" value="1"/>
</dbReference>
<dbReference type="Gene3D" id="3.30.70.1660">
    <property type="match status" value="2"/>
</dbReference>
<dbReference type="Gene3D" id="6.10.140.1950">
    <property type="match status" value="1"/>
</dbReference>
<dbReference type="HAMAP" id="MF_00093">
    <property type="entry name" value="Rel_fac_1"/>
    <property type="match status" value="1"/>
</dbReference>
<dbReference type="InterPro" id="IPR005139">
    <property type="entry name" value="PCRF"/>
</dbReference>
<dbReference type="InterPro" id="IPR000352">
    <property type="entry name" value="Pep_chain_release_fac_I"/>
</dbReference>
<dbReference type="InterPro" id="IPR045853">
    <property type="entry name" value="Pep_chain_release_fac_I_sf"/>
</dbReference>
<dbReference type="InterPro" id="IPR050057">
    <property type="entry name" value="Prokaryotic/Mito_RF"/>
</dbReference>
<dbReference type="InterPro" id="IPR004373">
    <property type="entry name" value="RF-1"/>
</dbReference>
<dbReference type="NCBIfam" id="TIGR00019">
    <property type="entry name" value="prfA"/>
    <property type="match status" value="1"/>
</dbReference>
<dbReference type="NCBIfam" id="NF001859">
    <property type="entry name" value="PRK00591.1"/>
    <property type="match status" value="1"/>
</dbReference>
<dbReference type="PANTHER" id="PTHR43804">
    <property type="entry name" value="LD18447P"/>
    <property type="match status" value="1"/>
</dbReference>
<dbReference type="PANTHER" id="PTHR43804:SF8">
    <property type="entry name" value="PEPTIDE CHAIN RELEASE FACTOR APG3, CHLOROPLASTIC"/>
    <property type="match status" value="1"/>
</dbReference>
<dbReference type="Pfam" id="PF03462">
    <property type="entry name" value="PCRF"/>
    <property type="match status" value="1"/>
</dbReference>
<dbReference type="Pfam" id="PF00472">
    <property type="entry name" value="RF-1"/>
    <property type="match status" value="1"/>
</dbReference>
<dbReference type="SMART" id="SM00937">
    <property type="entry name" value="PCRF"/>
    <property type="match status" value="1"/>
</dbReference>
<dbReference type="SUPFAM" id="SSF75620">
    <property type="entry name" value="Release factor"/>
    <property type="match status" value="1"/>
</dbReference>
<dbReference type="PROSITE" id="PS00745">
    <property type="entry name" value="RF_PROK_I"/>
    <property type="match status" value="1"/>
</dbReference>
<keyword id="KW-0963">Cytoplasm</keyword>
<keyword id="KW-0488">Methylation</keyword>
<keyword id="KW-0648">Protein biosynthesis</keyword>
<organism>
    <name type="scientific">Microcystis aeruginosa (strain NIES-843 / IAM M-2473)</name>
    <dbReference type="NCBI Taxonomy" id="449447"/>
    <lineage>
        <taxon>Bacteria</taxon>
        <taxon>Bacillati</taxon>
        <taxon>Cyanobacteriota</taxon>
        <taxon>Cyanophyceae</taxon>
        <taxon>Oscillatoriophycideae</taxon>
        <taxon>Chroococcales</taxon>
        <taxon>Microcystaceae</taxon>
        <taxon>Microcystis</taxon>
    </lineage>
</organism>
<evidence type="ECO:0000255" key="1">
    <source>
        <dbReference type="HAMAP-Rule" id="MF_00093"/>
    </source>
</evidence>
<accession>B0JYC5</accession>
<comment type="function">
    <text evidence="1">Peptide chain release factor 1 directs the termination of translation in response to the peptide chain termination codons UAG and UAA.</text>
</comment>
<comment type="subcellular location">
    <subcellularLocation>
        <location evidence="1">Cytoplasm</location>
    </subcellularLocation>
</comment>
<comment type="PTM">
    <text evidence="1">Methylated by PrmC. Methylation increases the termination efficiency of RF1.</text>
</comment>
<comment type="similarity">
    <text evidence="1">Belongs to the prokaryotic/mitochondrial release factor family.</text>
</comment>
<proteinExistence type="inferred from homology"/>
<gene>
    <name evidence="1" type="primary">prfA</name>
    <name type="ordered locus">MAE_53410</name>
</gene>
<name>RF1_MICAN</name>
<feature type="chain" id="PRO_1000075503" description="Peptide chain release factor 1">
    <location>
        <begin position="1"/>
        <end position="366"/>
    </location>
</feature>
<feature type="modified residue" description="N5-methylglutamine" evidence="1">
    <location>
        <position position="239"/>
    </location>
</feature>
<sequence length="366" mass="41132">MAESYLLDKLQSVEQTYKELTRRLADPDVTGNPGELHRLAKSRASLEETVNTYEIWQKSQEDLIGAKQIFKESASDPELREMAALEVAELEEKIATLEDQLTILLLPRDPLDEKNIMLEIRAGTGGDEASIWAGDLVRLYSKYAETQNWKVSLLSESQADMGGFKEAILEIKGDNVYSKLKFEAGVHRVQRVPLTEASGRVHTSTATVAIMPEVDDVEVHIDPKDIELTTARSGGAGGQNVNKVETAVDLIHKPTGIRVFCTEERSQLQNRERAMQILRAKLYDMKLQEQQEAVSSMRRSQVGTGSRSEKIRTYNYKDNRLTDHRLNQNFSLDRILDGDIEEVIQSCIAKDQQEKLAELAAAQETA</sequence>
<reference key="1">
    <citation type="journal article" date="2007" name="DNA Res.">
        <title>Complete genomic structure of the bloom-forming toxic cyanobacterium Microcystis aeruginosa NIES-843.</title>
        <authorList>
            <person name="Kaneko T."/>
            <person name="Nakajima N."/>
            <person name="Okamoto S."/>
            <person name="Suzuki I."/>
            <person name="Tanabe Y."/>
            <person name="Tamaoki M."/>
            <person name="Nakamura Y."/>
            <person name="Kasai F."/>
            <person name="Watanabe A."/>
            <person name="Kawashima K."/>
            <person name="Kishida Y."/>
            <person name="Ono A."/>
            <person name="Shimizu Y."/>
            <person name="Takahashi C."/>
            <person name="Minami C."/>
            <person name="Fujishiro T."/>
            <person name="Kohara M."/>
            <person name="Katoh M."/>
            <person name="Nakazaki N."/>
            <person name="Nakayama S."/>
            <person name="Yamada M."/>
            <person name="Tabata S."/>
            <person name="Watanabe M.M."/>
        </authorList>
    </citation>
    <scope>NUCLEOTIDE SEQUENCE [LARGE SCALE GENOMIC DNA]</scope>
    <source>
        <strain>NIES-843 / IAM M-247</strain>
    </source>
</reference>
<protein>
    <recommendedName>
        <fullName evidence="1">Peptide chain release factor 1</fullName>
        <shortName evidence="1">RF-1</shortName>
    </recommendedName>
</protein>